<reference key="1">
    <citation type="journal article" date="2003" name="J. Bacteriol.">
        <title>Genetic loci for coaggregation receptor polysaccharide biosynthesis in Streptococcus gordonii 38.</title>
        <authorList>
            <person name="Xu D.-Q."/>
            <person name="Thompson J."/>
            <person name="Cisar J.O."/>
        </authorList>
    </citation>
    <scope>NUCLEOTIDE SEQUENCE [GENOMIC DNA]</scope>
    <source>
        <strain>38</strain>
    </source>
</reference>
<reference key="2">
    <citation type="journal article" date="2005" name="Mol. Microbiol.">
        <title>Carbohydrate engineering of the recognition motifs in streptococcal co-aggregation receptor polysaccharides.</title>
        <authorList>
            <person name="Yoshida Y."/>
            <person name="Ganguly S."/>
            <person name="Bush C.A."/>
            <person name="Cisar J.O."/>
        </authorList>
    </citation>
    <scope>GENE EXCHANGE WITH WEFF OF S.MITIS</scope>
    <source>
        <strain>38</strain>
    </source>
</reference>
<reference key="3">
    <citation type="journal article" date="2005" name="PLoS Comput. Biol.">
        <title>Stealth proteins: in silico identification of a novel protein family rendering bacterial pathogens invisible to host immune defense.</title>
        <authorList>
            <person name="Sperisen P."/>
            <person name="Schmid C.D."/>
            <person name="Bucher P."/>
            <person name="Zilian O."/>
        </authorList>
    </citation>
    <scope>IDENTIFICATION AS A STEALTH PROTEIN</scope>
    <scope>PREDICTION OF FUNCTION</scope>
</reference>
<organism>
    <name type="scientific">Streptococcus gordonii</name>
    <dbReference type="NCBI Taxonomy" id="1302"/>
    <lineage>
        <taxon>Bacteria</taxon>
        <taxon>Bacillati</taxon>
        <taxon>Bacillota</taxon>
        <taxon>Bacilli</taxon>
        <taxon>Lactobacillales</taxon>
        <taxon>Streptococcaceae</taxon>
        <taxon>Streptococcus</taxon>
    </lineage>
</organism>
<feature type="chain" id="PRO_0000235964" description="Receptor polysaccharide phosphotransferase WefC">
    <location>
        <begin position="1"/>
        <end position="333"/>
    </location>
</feature>
<keyword id="KW-0270">Exopolysaccharide synthesis</keyword>
<keyword id="KW-0808">Transferase</keyword>
<accession>Q83YR8</accession>
<evidence type="ECO:0000305" key="1"/>
<sequence>MVEKIDFVVAWVDGNDLVWREKKAQYDGSINTFKEGMNSEKSYREWGTFKYWFRGVEKFAPWVNKIYLVTDQQKPSWLDINSEKLVLVDHTEIICNDYLPVFSANPIESNIHRIPGLSEHFVFFNDDMYLTAPVEPIDFFSEDGLPKYVTALAPITTERYGTGHFQMNDMGIITSHFSKKEILNNGHFFSFKHGIKQLIKTLLYGTTKFICGFWESHLPYPLLKSTMDLVWEKEKAVLETTSASRFRSPSDTNVWLFKYWQIASGQYAIGNPKLGGLFSLDNAGPDFWKLLNSGKYQIMCINDGHNVQDEEQVMTDFVKAMDQLLPDKSSFEI</sequence>
<dbReference type="EC" id="2.7.-.-"/>
<dbReference type="EMBL" id="AY147914">
    <property type="protein sequence ID" value="AAN64563.1"/>
    <property type="molecule type" value="Genomic_DNA"/>
</dbReference>
<dbReference type="RefSeq" id="WP_048779057.1">
    <property type="nucleotide sequence ID" value="NZ_JAHZQM010000007.1"/>
</dbReference>
<dbReference type="SMR" id="Q83YR8"/>
<dbReference type="GO" id="GO:0016772">
    <property type="term" value="F:transferase activity, transferring phosphorus-containing groups"/>
    <property type="evidence" value="ECO:0007669"/>
    <property type="project" value="InterPro"/>
</dbReference>
<dbReference type="GO" id="GO:0000271">
    <property type="term" value="P:polysaccharide biosynthetic process"/>
    <property type="evidence" value="ECO:0007669"/>
    <property type="project" value="UniProtKB-KW"/>
</dbReference>
<dbReference type="InterPro" id="IPR047141">
    <property type="entry name" value="Stealth"/>
</dbReference>
<dbReference type="InterPro" id="IPR031358">
    <property type="entry name" value="Stealth_CR1"/>
</dbReference>
<dbReference type="InterPro" id="IPR021520">
    <property type="entry name" value="Stealth_CR2"/>
</dbReference>
<dbReference type="InterPro" id="IPR031357">
    <property type="entry name" value="Stealth_CR3"/>
</dbReference>
<dbReference type="PANTHER" id="PTHR24045">
    <property type="match status" value="1"/>
</dbReference>
<dbReference type="PANTHER" id="PTHR24045:SF0">
    <property type="entry name" value="N-ACETYLGLUCOSAMINE-1-PHOSPHOTRANSFERASE SUBUNITS ALPHA_BETA"/>
    <property type="match status" value="1"/>
</dbReference>
<dbReference type="Pfam" id="PF17101">
    <property type="entry name" value="Stealth_CR1"/>
    <property type="match status" value="1"/>
</dbReference>
<dbReference type="Pfam" id="PF11380">
    <property type="entry name" value="Stealth_CR2"/>
    <property type="match status" value="1"/>
</dbReference>
<dbReference type="Pfam" id="PF17102">
    <property type="entry name" value="Stealth_CR3"/>
    <property type="match status" value="1"/>
</dbReference>
<comment type="function">
    <text>Part of the type 2Gn receptor polysaccharide (RPS) biosynthesis locus. Essential for cell surface RPS production, and for synthesis of the host-like GalNAc beta 1-3Gal (Gn) motif of the RPS. Probably encodes a 1-3Gal alpha transferase.</text>
</comment>
<comment type="miscellaneous">
    <text>The cell wall polysaccharides of some oral streptococci act as receptors for the lectin-like surface adhesins on other members of the oral biofilm community, especially type 2 fimbriated strains of Actinomyces naeslundii, allowing colonization of the human tooth surface. Recognition of these receptor polysaccharides (RPS) depends on the presence of a host-like motif, either GalNAc beta 1-3Gal (Gn) or Gal beta 1-3GalNAc (G), within the oligosaccharide repeating units of different RPS structural types. Type 2Gn RPS of S.gordonii strain 38 and type 2G RPS of S.mitis strain J22 are composed of heptasaccharide repeats that are identical except for their host-like motifs. This mimicry of the host glycoconjugates may help the bacteria evade the immune system.</text>
</comment>
<comment type="miscellaneous">
    <text>Stealth proteins are part of a protein family that is conserved from bacteria to higher eukaryotes. Family members were first identified in microbes as proteins that help pathogens to elude the host innate immune system. Microbial stealth proteins are involved in the biosynthesis of exopolysaccharides. Stealth proteins are predicted to function as hexose-1-phosphoryltransferases.</text>
</comment>
<comment type="similarity">
    <text evidence="1">Belongs to the stealth family.</text>
</comment>
<protein>
    <recommendedName>
        <fullName>Receptor polysaccharide phosphotransferase WefC</fullName>
        <ecNumber>2.7.-.-</ecNumber>
    </recommendedName>
    <alternativeName>
        <fullName>Stealth protein WefC</fullName>
    </alternativeName>
</protein>
<gene>
    <name type="primary">wefC</name>
</gene>
<proteinExistence type="inferred from homology"/>
<name>WEFC_STRGN</name>